<proteinExistence type="evidence at protein level"/>
<feature type="chain" id="PRO_0000099139" description="DNA-directed RNA polymerase 22 kDa subunit">
    <location>
        <begin position="1"/>
        <end position="185"/>
    </location>
</feature>
<gene>
    <name type="primary">OPG103</name>
    <name type="synonym">RPO22</name>
    <name type="ORF">J4R</name>
</gene>
<protein>
    <recommendedName>
        <fullName>DNA-directed RNA polymerase 22 kDa subunit</fullName>
        <ecNumber>2.7.7.6</ecNumber>
    </recommendedName>
</protein>
<keyword id="KW-0002">3D-structure</keyword>
<keyword id="KW-0240">DNA-directed RNA polymerase</keyword>
<keyword id="KW-0548">Nucleotidyltransferase</keyword>
<keyword id="KW-1185">Reference proteome</keyword>
<keyword id="KW-0804">Transcription</keyword>
<keyword id="KW-0808">Transferase</keyword>
<keyword id="KW-0946">Virion</keyword>
<organismHost>
    <name type="scientific">Homo sapiens</name>
    <name type="common">Human</name>
    <dbReference type="NCBI Taxonomy" id="9606"/>
</organismHost>
<reference key="1">
    <citation type="journal article" date="1990" name="Virology">
        <title>The complete DNA sequence of vaccinia virus.</title>
        <authorList>
            <person name="Goebel S.J."/>
            <person name="Johnson G.P."/>
            <person name="Perkus M.E."/>
            <person name="Davis S.W."/>
            <person name="Winslow J.P."/>
            <person name="Paoletti E."/>
        </authorList>
    </citation>
    <scope>NUCLEOTIDE SEQUENCE [LARGE SCALE GENOMIC DNA]</scope>
</reference>
<reference key="2">
    <citation type="journal article" date="1990" name="Virology">
        <title>Appendix to 'The complete DNA sequence of vaccinia virus'.</title>
        <authorList>
            <person name="Goebel S.J."/>
            <person name="Johnson G.P."/>
            <person name="Perkus M.E."/>
            <person name="Davis S.W."/>
            <person name="Winslow J.P."/>
            <person name="Paoletti E."/>
        </authorList>
    </citation>
    <scope>NUCLEOTIDE SEQUENCE [LARGE SCALE GENOMIC DNA]</scope>
</reference>
<reference key="3">
    <citation type="journal article" date="2003" name="J. Gen. Virol.">
        <title>Vaccinia virus transcription.</title>
        <authorList>
            <person name="Broyles S.S."/>
        </authorList>
    </citation>
    <scope>REVIEW</scope>
</reference>
<dbReference type="EC" id="2.7.7.6"/>
<dbReference type="EMBL" id="M35027">
    <property type="protein sequence ID" value="AAA48084.1"/>
    <property type="molecule type" value="Genomic_DNA"/>
</dbReference>
<dbReference type="PIR" id="A25734">
    <property type="entry name" value="RNVZ22"/>
</dbReference>
<dbReference type="PDB" id="8P0J">
    <property type="method" value="EM"/>
    <property type="resolution" value="2.39 A"/>
    <property type="chains" value="E=1-185"/>
</dbReference>
<dbReference type="PDB" id="8P0K">
    <property type="method" value="EM"/>
    <property type="resolution" value="2.64 A"/>
    <property type="chains" value="E=1-185"/>
</dbReference>
<dbReference type="PDB" id="8P0N">
    <property type="method" value="EM"/>
    <property type="resolution" value="2.58 A"/>
    <property type="chains" value="E=1-185"/>
</dbReference>
<dbReference type="PDB" id="8RQK">
    <property type="method" value="EM"/>
    <property type="resolution" value="2.65 A"/>
    <property type="chains" value="E=1-185"/>
</dbReference>
<dbReference type="PDBsum" id="8P0J"/>
<dbReference type="PDBsum" id="8P0K"/>
<dbReference type="PDBsum" id="8P0N"/>
<dbReference type="PDBsum" id="8RQK"/>
<dbReference type="EMDB" id="EMD-17334"/>
<dbReference type="EMDB" id="EMD-17335"/>
<dbReference type="EMDB" id="EMD-17336"/>
<dbReference type="EMDB" id="EMD-19442"/>
<dbReference type="SMR" id="P68608"/>
<dbReference type="Proteomes" id="UP000008269">
    <property type="component" value="Segment"/>
</dbReference>
<dbReference type="GO" id="GO:0000428">
    <property type="term" value="C:DNA-directed RNA polymerase complex"/>
    <property type="evidence" value="ECO:0007669"/>
    <property type="project" value="UniProtKB-KW"/>
</dbReference>
<dbReference type="GO" id="GO:0044423">
    <property type="term" value="C:virion component"/>
    <property type="evidence" value="ECO:0007669"/>
    <property type="project" value="UniProtKB-KW"/>
</dbReference>
<dbReference type="GO" id="GO:0003677">
    <property type="term" value="F:DNA binding"/>
    <property type="evidence" value="ECO:0007669"/>
    <property type="project" value="InterPro"/>
</dbReference>
<dbReference type="GO" id="GO:0003899">
    <property type="term" value="F:DNA-directed RNA polymerase activity"/>
    <property type="evidence" value="ECO:0007669"/>
    <property type="project" value="UniProtKB-EC"/>
</dbReference>
<dbReference type="GO" id="GO:0019083">
    <property type="term" value="P:viral transcription"/>
    <property type="evidence" value="ECO:0007669"/>
    <property type="project" value="InterPro"/>
</dbReference>
<dbReference type="InterPro" id="IPR007937">
    <property type="entry name" value="RNA_Pol_22kDa_poxvir"/>
</dbReference>
<dbReference type="Pfam" id="PF05273">
    <property type="entry name" value="Pox_RNA_Pol_22"/>
    <property type="match status" value="1"/>
</dbReference>
<dbReference type="PIRSF" id="PIRSF000744">
    <property type="entry name" value="RPO22"/>
    <property type="match status" value="1"/>
</dbReference>
<organism>
    <name type="scientific">Vaccinia virus (strain Copenhagen)</name>
    <name type="common">VACV</name>
    <dbReference type="NCBI Taxonomy" id="10249"/>
    <lineage>
        <taxon>Viruses</taxon>
        <taxon>Varidnaviria</taxon>
        <taxon>Bamfordvirae</taxon>
        <taxon>Nucleocytoviricota</taxon>
        <taxon>Pokkesviricetes</taxon>
        <taxon>Chitovirales</taxon>
        <taxon>Poxviridae</taxon>
        <taxon>Chordopoxvirinae</taxon>
        <taxon>Orthopoxvirus</taxon>
        <taxon>Vaccinia virus</taxon>
    </lineage>
</organism>
<comment type="function">
    <text evidence="1">Part of the DNA-dependent RNA polymerase which catalyzes the transcription of viral DNA into RNA using the four ribonucleoside triphosphates as substrates. Responsible for the transcription of early, intermediate and late genes. DNA-dependent RNA polymerase associates with the early transcription factor (ETF), itself composed of OPG118 and OPG133, thereby allowing the early genes transcription. Late transcription, and probably also intermediate transcription, require newly synthesized RNA polymerase.</text>
</comment>
<comment type="catalytic activity">
    <reaction evidence="1">
        <text>RNA(n) + a ribonucleoside 5'-triphosphate = RNA(n+1) + diphosphate</text>
        <dbReference type="Rhea" id="RHEA:21248"/>
        <dbReference type="Rhea" id="RHEA-COMP:14527"/>
        <dbReference type="Rhea" id="RHEA-COMP:17342"/>
        <dbReference type="ChEBI" id="CHEBI:33019"/>
        <dbReference type="ChEBI" id="CHEBI:61557"/>
        <dbReference type="ChEBI" id="CHEBI:140395"/>
        <dbReference type="EC" id="2.7.7.6"/>
    </reaction>
</comment>
<comment type="subunit">
    <text evidence="1">The DNA-dependent RNA polymerase used for intermediate and late genes expression consists of eight subunits Rpo30/OPG66, Rpo7/OPG90, Rpo22/OPG103, Rpo147/OPG105, Rpo18/OPG119, Rpo19/OPG131, Rpo132/OPG151 and Rpo35/OPG156. The same holoenzyme, with the addition of the transcription-specificity factor OPG109, is used for early gene expression.</text>
</comment>
<comment type="subcellular location">
    <subcellularLocation>
        <location evidence="1">Virion</location>
    </subcellularLocation>
    <text evidence="1">All the enzymes and other proteins required to synthesize early mRNAs are packaged within the virion core along with the DNA genome. This is necessary because viral early mRNAs are synthesized within minutes after virus entry into the cell and are extruded through pores in the core particle.</text>
</comment>
<comment type="similarity">
    <text evidence="2">Belongs to the poxviridae DNA-directed RNA polymerase 22 kDa subunit family.</text>
</comment>
<evidence type="ECO:0000250" key="1">
    <source>
        <dbReference type="UniProtKB" id="P68609"/>
    </source>
</evidence>
<evidence type="ECO:0000305" key="2"/>
<accession>P68608</accession>
<accession>P07391</accession>
<sequence length="185" mass="21342">MNQYNVKYLAKILCLKTEIARDPYAVINRNVLLRYTTDIEYNDLVTLITVRHKIDSMKTVFQVFNESSINYTPVDDDYGEPIIITSYLQKGHNKFPVNFLYIDVVISDLFPSFVRLDTTETNIVNSVLQTGDGKKTLRLPKMLETEIVVKILYRPNIPLKIVRFFRNNMVTGVEIADRSVISVAD</sequence>
<name>RP22_VACCC</name>